<comment type="function">
    <text evidence="1">Component of the DNA replication complex, which interacts with two kinases, CDK2 and CDC7, thereby providing a functional and physical link between CDK2 and CDC7 during firing of the origins of replication. Regulates ATR-mediated checkpoint signaling in response to DNA damage. Part of the 55LCC heterohexameric ATPase complex which is chromatin-associated and promotes replisome proteostasis to maintain replication fork progression and genome stability. Required for replication fork progression, sister chromatid cohesion, and chromosome stability. The ATPase activity is specifically enhanced by replication fork DNA and is coupled to cysteine protease-dependent cleavage of replisome substrates in response to replication fork damage. Uses ATPase activity to process replisome substrates in S-phase, facilitating their proteolytic turnover from chromatin to ensure DNA replication and mitotic fidelity. As part of 55LCC complex, also involved in the cytoplasmic maturation steps of pre-60S ribosomal particles by promoting the release of shuttling protein RSL24D1/RLP24 from the pre-ribosomal particles.</text>
</comment>
<comment type="subunit">
    <text evidence="1">Homodimer. Part of the 55LCC heterohexameric ATPase complex composed at least of AIRIM, AFG2A, AFG2B and CINP. Interacts with AIRIM. Interacts with CDK2 and CDC7. Interacts with the components of the replication complex, MCM2, MCM3, MCM4, MCM5, MCM6, MCM7 and with ORC2-containing complexes. Interacts with ATRIP. Interacts with CEP152. Associates with pre-60S ribosomal particles.</text>
</comment>
<comment type="subcellular location">
    <subcellularLocation>
        <location evidence="1">Nucleus</location>
    </subcellularLocation>
    <text evidence="1">Binds to nuclear under G1 conditions, and dissociates from chromatin with the start of DNA replication.</text>
</comment>
<comment type="PTM">
    <text evidence="1">Phosphorylated by CDC7 but not by CDK2.</text>
</comment>
<comment type="similarity">
    <text evidence="3">Belongs to the CINP family.</text>
</comment>
<accession>A6H7E2</accession>
<reference key="1">
    <citation type="submission" date="2007-06" db="EMBL/GenBank/DDBJ databases">
        <authorList>
            <consortium name="NIH - Mammalian Gene Collection (MGC) project"/>
        </authorList>
    </citation>
    <scope>NUCLEOTIDE SEQUENCE [LARGE SCALE MRNA]</scope>
    <source>
        <strain>Hereford</strain>
        <tissue>Fetal skin</tissue>
    </source>
</reference>
<dbReference type="EMBL" id="BC146212">
    <property type="protein sequence ID" value="AAI46213.1"/>
    <property type="molecule type" value="mRNA"/>
</dbReference>
<dbReference type="RefSeq" id="NP_001092595.1">
    <property type="nucleotide sequence ID" value="NM_001099125.1"/>
</dbReference>
<dbReference type="SMR" id="A6H7E2"/>
<dbReference type="FunCoup" id="A6H7E2">
    <property type="interactions" value="2089"/>
</dbReference>
<dbReference type="STRING" id="9913.ENSBTAP00000014592"/>
<dbReference type="PaxDb" id="9913-ENSBTAP00000014592"/>
<dbReference type="Ensembl" id="ENSBTAT00000106751.1">
    <property type="protein sequence ID" value="ENSBTAP00000101518.1"/>
    <property type="gene ID" value="ENSBTAG00000010995.6"/>
</dbReference>
<dbReference type="GeneID" id="613767"/>
<dbReference type="KEGG" id="bta:613767"/>
<dbReference type="CTD" id="51550"/>
<dbReference type="VEuPathDB" id="HostDB:ENSBTAG00000010995"/>
<dbReference type="VGNC" id="VGNC:27368">
    <property type="gene designation" value="CINP"/>
</dbReference>
<dbReference type="eggNOG" id="ENOG502S092">
    <property type="taxonomic scope" value="Eukaryota"/>
</dbReference>
<dbReference type="GeneTree" id="ENSGT00390000015784"/>
<dbReference type="HOGENOM" id="CLU_077982_0_0_1"/>
<dbReference type="InParanoid" id="A6H7E2"/>
<dbReference type="OrthoDB" id="17066at2759"/>
<dbReference type="TreeFam" id="TF329462"/>
<dbReference type="Proteomes" id="UP000009136">
    <property type="component" value="Chromosome 21"/>
</dbReference>
<dbReference type="Bgee" id="ENSBTAG00000010995">
    <property type="expression patterns" value="Expressed in oocyte and 105 other cell types or tissues"/>
</dbReference>
<dbReference type="GO" id="GO:0005634">
    <property type="term" value="C:nucleus"/>
    <property type="evidence" value="ECO:0007669"/>
    <property type="project" value="UniProtKB-SubCell"/>
</dbReference>
<dbReference type="GO" id="GO:1990275">
    <property type="term" value="F:preribosome binding"/>
    <property type="evidence" value="ECO:0000250"/>
    <property type="project" value="UniProtKB"/>
</dbReference>
<dbReference type="GO" id="GO:0051301">
    <property type="term" value="P:cell division"/>
    <property type="evidence" value="ECO:0007669"/>
    <property type="project" value="UniProtKB-KW"/>
</dbReference>
<dbReference type="GO" id="GO:0006281">
    <property type="term" value="P:DNA repair"/>
    <property type="evidence" value="ECO:0007669"/>
    <property type="project" value="UniProtKB-KW"/>
</dbReference>
<dbReference type="GO" id="GO:0006260">
    <property type="term" value="P:DNA replication"/>
    <property type="evidence" value="ECO:0007669"/>
    <property type="project" value="UniProtKB-KW"/>
</dbReference>
<dbReference type="GO" id="GO:0042273">
    <property type="term" value="P:ribosomal large subunit biogenesis"/>
    <property type="evidence" value="ECO:0000250"/>
    <property type="project" value="UniProtKB"/>
</dbReference>
<dbReference type="InterPro" id="IPR023250">
    <property type="entry name" value="Cyclin-dep_Kinase_2_interact"/>
</dbReference>
<dbReference type="PANTHER" id="PTHR15827">
    <property type="entry name" value="CYCLIN-DEPENDENT KINASE 2-INTERACTING PROTEIN"/>
    <property type="match status" value="1"/>
</dbReference>
<dbReference type="PANTHER" id="PTHR15827:SF2">
    <property type="entry name" value="CYCLIN-DEPENDENT KINASE 2-INTERACTING PROTEIN"/>
    <property type="match status" value="1"/>
</dbReference>
<dbReference type="PRINTS" id="PR02040">
    <property type="entry name" value="CDK2IP"/>
</dbReference>
<proteinExistence type="evidence at transcript level"/>
<organism>
    <name type="scientific">Bos taurus</name>
    <name type="common">Bovine</name>
    <dbReference type="NCBI Taxonomy" id="9913"/>
    <lineage>
        <taxon>Eukaryota</taxon>
        <taxon>Metazoa</taxon>
        <taxon>Chordata</taxon>
        <taxon>Craniata</taxon>
        <taxon>Vertebrata</taxon>
        <taxon>Euteleostomi</taxon>
        <taxon>Mammalia</taxon>
        <taxon>Eutheria</taxon>
        <taxon>Laurasiatheria</taxon>
        <taxon>Artiodactyla</taxon>
        <taxon>Ruminantia</taxon>
        <taxon>Pecora</taxon>
        <taxon>Bovidae</taxon>
        <taxon>Bovinae</taxon>
        <taxon>Bos</taxon>
    </lineage>
</organism>
<sequence>MEAKTLGTVTPRKPVLSVSARKIKDNAADWHNLILKWETLNDGGFATANSIANMKISLSSKDKIELASSGLASNDCAEKEHPEYSRELETLCEELQATLEGLTKIQMKMEKLSSTTKGVCELEDYHHGEERKRPPLFHTWPTAHFYEVSRKLSDMYSQELRLKRTVVEQLAHTADRDLALSYLSMWLHQPYLEAGSWLLLESMLLETGHRVL</sequence>
<gene>
    <name type="primary">CINP</name>
</gene>
<evidence type="ECO:0000250" key="1">
    <source>
        <dbReference type="UniProtKB" id="Q9BW66"/>
    </source>
</evidence>
<evidence type="ECO:0000255" key="2"/>
<evidence type="ECO:0000305" key="3"/>
<feature type="chain" id="PRO_0000326054" description="Cyclin-dependent kinase 2-interacting protein">
    <location>
        <begin position="1"/>
        <end position="212"/>
    </location>
</feature>
<feature type="coiled-coil region" evidence="2">
    <location>
        <begin position="74"/>
        <end position="106"/>
    </location>
</feature>
<feature type="modified residue" description="N-acetylmethionine" evidence="1">
    <location>
        <position position="1"/>
    </location>
</feature>
<feature type="modified residue" description="Phosphoserine" evidence="1">
    <location>
        <position position="69"/>
    </location>
</feature>
<feature type="modified residue" description="Phosphoserine" evidence="1">
    <location>
        <position position="73"/>
    </location>
</feature>
<name>CINP_BOVIN</name>
<keyword id="KW-0007">Acetylation</keyword>
<keyword id="KW-0131">Cell cycle</keyword>
<keyword id="KW-0132">Cell division</keyword>
<keyword id="KW-0175">Coiled coil</keyword>
<keyword id="KW-0227">DNA damage</keyword>
<keyword id="KW-0234">DNA repair</keyword>
<keyword id="KW-0235">DNA replication</keyword>
<keyword id="KW-0539">Nucleus</keyword>
<keyword id="KW-0597">Phosphoprotein</keyword>
<keyword id="KW-1185">Reference proteome</keyword>
<keyword id="KW-0690">Ribosome biogenesis</keyword>
<protein>
    <recommendedName>
        <fullName>Cyclin-dependent kinase 2-interacting protein</fullName>
    </recommendedName>
</protein>